<evidence type="ECO:0000250" key="1"/>
<evidence type="ECO:0000256" key="2">
    <source>
        <dbReference type="SAM" id="MobiDB-lite"/>
    </source>
</evidence>
<evidence type="ECO:0000305" key="3"/>
<keyword id="KW-0046">Antibiotic resistance</keyword>
<keyword id="KW-0488">Methylation</keyword>
<keyword id="KW-0687">Ribonucleoprotein</keyword>
<keyword id="KW-0689">Ribosomal protein</keyword>
<keyword id="KW-0694">RNA-binding</keyword>
<keyword id="KW-0699">rRNA-binding</keyword>
<keyword id="KW-0820">tRNA-binding</keyword>
<dbReference type="EMBL" id="AE001439">
    <property type="protein sequence ID" value="AAD06691.1"/>
    <property type="molecule type" value="Genomic_DNA"/>
</dbReference>
<dbReference type="PIR" id="E64669">
    <property type="entry name" value="E64669"/>
</dbReference>
<dbReference type="RefSeq" id="WP_001142321.1">
    <property type="nucleotide sequence ID" value="NZ_CP011330.1"/>
</dbReference>
<dbReference type="SMR" id="P0A0X5"/>
<dbReference type="GeneID" id="93237675"/>
<dbReference type="KEGG" id="hpj:jhp_1120"/>
<dbReference type="PATRIC" id="fig|85963.30.peg.1457"/>
<dbReference type="eggNOG" id="COG0048">
    <property type="taxonomic scope" value="Bacteria"/>
</dbReference>
<dbReference type="Proteomes" id="UP000000804">
    <property type="component" value="Chromosome"/>
</dbReference>
<dbReference type="GO" id="GO:0015935">
    <property type="term" value="C:small ribosomal subunit"/>
    <property type="evidence" value="ECO:0007669"/>
    <property type="project" value="InterPro"/>
</dbReference>
<dbReference type="GO" id="GO:0019843">
    <property type="term" value="F:rRNA binding"/>
    <property type="evidence" value="ECO:0007669"/>
    <property type="project" value="UniProtKB-UniRule"/>
</dbReference>
<dbReference type="GO" id="GO:0003735">
    <property type="term" value="F:structural constituent of ribosome"/>
    <property type="evidence" value="ECO:0007669"/>
    <property type="project" value="InterPro"/>
</dbReference>
<dbReference type="GO" id="GO:0000049">
    <property type="term" value="F:tRNA binding"/>
    <property type="evidence" value="ECO:0007669"/>
    <property type="project" value="UniProtKB-UniRule"/>
</dbReference>
<dbReference type="GO" id="GO:0046677">
    <property type="term" value="P:response to antibiotic"/>
    <property type="evidence" value="ECO:0007669"/>
    <property type="project" value="UniProtKB-KW"/>
</dbReference>
<dbReference type="GO" id="GO:0006412">
    <property type="term" value="P:translation"/>
    <property type="evidence" value="ECO:0007669"/>
    <property type="project" value="UniProtKB-UniRule"/>
</dbReference>
<dbReference type="CDD" id="cd03368">
    <property type="entry name" value="Ribosomal_S12"/>
    <property type="match status" value="1"/>
</dbReference>
<dbReference type="FunFam" id="2.40.50.140:FF:000001">
    <property type="entry name" value="30S ribosomal protein S12"/>
    <property type="match status" value="1"/>
</dbReference>
<dbReference type="Gene3D" id="2.40.50.140">
    <property type="entry name" value="Nucleic acid-binding proteins"/>
    <property type="match status" value="1"/>
</dbReference>
<dbReference type="HAMAP" id="MF_00403_B">
    <property type="entry name" value="Ribosomal_uS12_B"/>
    <property type="match status" value="1"/>
</dbReference>
<dbReference type="InterPro" id="IPR012340">
    <property type="entry name" value="NA-bd_OB-fold"/>
</dbReference>
<dbReference type="InterPro" id="IPR006032">
    <property type="entry name" value="Ribosomal_uS12"/>
</dbReference>
<dbReference type="InterPro" id="IPR005679">
    <property type="entry name" value="Ribosomal_uS12_bac"/>
</dbReference>
<dbReference type="NCBIfam" id="TIGR00981">
    <property type="entry name" value="rpsL_bact"/>
    <property type="match status" value="1"/>
</dbReference>
<dbReference type="PANTHER" id="PTHR11652">
    <property type="entry name" value="30S RIBOSOMAL PROTEIN S12 FAMILY MEMBER"/>
    <property type="match status" value="1"/>
</dbReference>
<dbReference type="Pfam" id="PF00164">
    <property type="entry name" value="Ribosom_S12_S23"/>
    <property type="match status" value="1"/>
</dbReference>
<dbReference type="PIRSF" id="PIRSF002133">
    <property type="entry name" value="Ribosomal_S12/S23"/>
    <property type="match status" value="1"/>
</dbReference>
<dbReference type="PRINTS" id="PR01034">
    <property type="entry name" value="RIBOSOMALS12"/>
</dbReference>
<dbReference type="SUPFAM" id="SSF50249">
    <property type="entry name" value="Nucleic acid-binding proteins"/>
    <property type="match status" value="1"/>
</dbReference>
<dbReference type="PROSITE" id="PS00055">
    <property type="entry name" value="RIBOSOMAL_S12"/>
    <property type="match status" value="1"/>
</dbReference>
<sequence length="135" mass="15106">MPTINQLIRKERKKVVKKTKSPALVECPQRRGVCTRVYTTTPKKPNSALRKVAKVRLTSKFEVISYIPGEGHNLQEHSIVLVRGGRVKDLPGVKYHIVRGALDTAGVNKRTVSRSKYGTKKAKATDKKATDNKKK</sequence>
<name>RS12_HELPJ</name>
<gene>
    <name type="primary">rpsL</name>
    <name type="ordered locus">jhp_1120</name>
</gene>
<comment type="function">
    <text evidence="1">With S4 and S5 plays an important role in translational accuracy.</text>
</comment>
<comment type="function">
    <text evidence="1">Interacts with and stabilizes bases of the 16S rRNA that are involved in tRNA selection in the A site and with the mRNA backbone. Located at the interface of the 30S and 50S subunits, it traverses the body of the 30S subunit contacting proteins on the other side and probably holding the rRNA structure together. The combined cluster of proteins S8, S12 and S17 appears to hold together the shoulder and platform of the 30S subunit (By similarity).</text>
</comment>
<comment type="subunit">
    <text evidence="1">Part of the 30S ribosomal subunit. Contacts proteins S8 and S17. May interact with IF1 in the 30S initiation complex (By similarity).</text>
</comment>
<comment type="similarity">
    <text evidence="3">Belongs to the universal ribosomal protein uS12 family.</text>
</comment>
<feature type="chain" id="PRO_0000146236" description="Small ribosomal subunit protein uS12">
    <location>
        <begin position="1"/>
        <end position="135"/>
    </location>
</feature>
<feature type="region of interest" description="Disordered" evidence="2">
    <location>
        <begin position="108"/>
        <end position="135"/>
    </location>
</feature>
<feature type="compositionally biased region" description="Basic residues" evidence="2">
    <location>
        <begin position="111"/>
        <end position="122"/>
    </location>
</feature>
<feature type="compositionally biased region" description="Basic and acidic residues" evidence="2">
    <location>
        <begin position="123"/>
        <end position="135"/>
    </location>
</feature>
<feature type="modified residue" description="3-methylthioaspartic acid" evidence="1">
    <location>
        <position position="89"/>
    </location>
</feature>
<proteinExistence type="inferred from homology"/>
<organism>
    <name type="scientific">Helicobacter pylori (strain J99 / ATCC 700824)</name>
    <name type="common">Campylobacter pylori J99</name>
    <dbReference type="NCBI Taxonomy" id="85963"/>
    <lineage>
        <taxon>Bacteria</taxon>
        <taxon>Pseudomonadati</taxon>
        <taxon>Campylobacterota</taxon>
        <taxon>Epsilonproteobacteria</taxon>
        <taxon>Campylobacterales</taxon>
        <taxon>Helicobacteraceae</taxon>
        <taxon>Helicobacter</taxon>
    </lineage>
</organism>
<reference key="1">
    <citation type="journal article" date="1999" name="Nature">
        <title>Genomic sequence comparison of two unrelated isolates of the human gastric pathogen Helicobacter pylori.</title>
        <authorList>
            <person name="Alm R.A."/>
            <person name="Ling L.-S.L."/>
            <person name="Moir D.T."/>
            <person name="King B.L."/>
            <person name="Brown E.D."/>
            <person name="Doig P.C."/>
            <person name="Smith D.R."/>
            <person name="Noonan B."/>
            <person name="Guild B.C."/>
            <person name="deJonge B.L."/>
            <person name="Carmel G."/>
            <person name="Tummino P.J."/>
            <person name="Caruso A."/>
            <person name="Uria-Nickelsen M."/>
            <person name="Mills D.M."/>
            <person name="Ives C."/>
            <person name="Gibson R."/>
            <person name="Merberg D."/>
            <person name="Mills S.D."/>
            <person name="Jiang Q."/>
            <person name="Taylor D.E."/>
            <person name="Vovis G.F."/>
            <person name="Trust T.J."/>
        </authorList>
    </citation>
    <scope>NUCLEOTIDE SEQUENCE [LARGE SCALE GENOMIC DNA]</scope>
    <source>
        <strain>J99 / ATCC 700824</strain>
    </source>
</reference>
<accession>P0A0X5</accession>
<accession>P56019</accession>
<accession>Q9R787</accession>
<protein>
    <recommendedName>
        <fullName evidence="3">Small ribosomal subunit protein uS12</fullName>
    </recommendedName>
    <alternativeName>
        <fullName>30S ribosomal protein S12</fullName>
    </alternativeName>
</protein>